<keyword id="KW-0004">4Fe-4S</keyword>
<keyword id="KW-0169">Cobalamin biosynthesis</keyword>
<keyword id="KW-0349">Heme</keyword>
<keyword id="KW-0408">Iron</keyword>
<keyword id="KW-0411">Iron-sulfur</keyword>
<keyword id="KW-0479">Metal-binding</keyword>
<keyword id="KW-0520">NAD</keyword>
<keyword id="KW-0560">Oxidoreductase</keyword>
<keyword id="KW-0627">Porphyrin biosynthesis</keyword>
<dbReference type="EC" id="1.14.13.83"/>
<dbReference type="EMBL" id="M59301">
    <property type="protein sequence ID" value="AAA25795.1"/>
    <property type="molecule type" value="Genomic_DNA"/>
</dbReference>
<dbReference type="SMR" id="P21637"/>
<dbReference type="BioCyc" id="MetaCyc:MONOMER-84"/>
<dbReference type="UniPathway" id="UPA00148">
    <property type="reaction ID" value="UER00213"/>
</dbReference>
<dbReference type="GO" id="GO:0051539">
    <property type="term" value="F:4 iron, 4 sulfur cluster binding"/>
    <property type="evidence" value="ECO:0007669"/>
    <property type="project" value="UniProtKB-KW"/>
</dbReference>
<dbReference type="GO" id="GO:0020037">
    <property type="term" value="F:heme binding"/>
    <property type="evidence" value="ECO:0007669"/>
    <property type="project" value="InterPro"/>
</dbReference>
<dbReference type="GO" id="GO:0046872">
    <property type="term" value="F:metal ion binding"/>
    <property type="evidence" value="ECO:0007669"/>
    <property type="project" value="UniProtKB-KW"/>
</dbReference>
<dbReference type="GO" id="GO:0043818">
    <property type="term" value="F:precorrin-3B synthase activity"/>
    <property type="evidence" value="ECO:0007669"/>
    <property type="project" value="UniProtKB-EC"/>
</dbReference>
<dbReference type="GO" id="GO:0009236">
    <property type="term" value="P:cobalamin biosynthetic process"/>
    <property type="evidence" value="ECO:0007669"/>
    <property type="project" value="UniProtKB-UniPathway"/>
</dbReference>
<dbReference type="GO" id="GO:0006779">
    <property type="term" value="P:porphyrin-containing compound biosynthetic process"/>
    <property type="evidence" value="ECO:0007669"/>
    <property type="project" value="UniProtKB-KW"/>
</dbReference>
<dbReference type="Gene3D" id="3.30.413.10">
    <property type="entry name" value="Sulfite Reductase Hemoprotein, domain 1"/>
    <property type="match status" value="2"/>
</dbReference>
<dbReference type="Gene3D" id="3.90.480.10">
    <property type="entry name" value="Sulfite Reductase Hemoprotein,Domain 2"/>
    <property type="match status" value="1"/>
</dbReference>
<dbReference type="InterPro" id="IPR012798">
    <property type="entry name" value="Cbl_synth_CobG-like"/>
</dbReference>
<dbReference type="InterPro" id="IPR051329">
    <property type="entry name" value="NIR_SIR_4Fe-4S"/>
</dbReference>
<dbReference type="InterPro" id="IPR005117">
    <property type="entry name" value="NiRdtase/SiRdtase_haem-b_fer"/>
</dbReference>
<dbReference type="InterPro" id="IPR036136">
    <property type="entry name" value="Nit/Sulf_reduc_fer-like_dom_sf"/>
</dbReference>
<dbReference type="InterPro" id="IPR045854">
    <property type="entry name" value="NO2/SO3_Rdtase_4Fe4S_sf"/>
</dbReference>
<dbReference type="InterPro" id="IPR006066">
    <property type="entry name" value="NO2/SO3_Rdtase_FeS/sirohaem_BS"/>
</dbReference>
<dbReference type="NCBIfam" id="TIGR02435">
    <property type="entry name" value="CobG"/>
    <property type="match status" value="1"/>
</dbReference>
<dbReference type="PANTHER" id="PTHR32439:SF9">
    <property type="entry name" value="BLR3264 PROTEIN"/>
    <property type="match status" value="1"/>
</dbReference>
<dbReference type="PANTHER" id="PTHR32439">
    <property type="entry name" value="FERREDOXIN--NITRITE REDUCTASE, CHLOROPLASTIC"/>
    <property type="match status" value="1"/>
</dbReference>
<dbReference type="Pfam" id="PF03460">
    <property type="entry name" value="NIR_SIR_ferr"/>
    <property type="match status" value="1"/>
</dbReference>
<dbReference type="SUPFAM" id="SSF56014">
    <property type="entry name" value="Nitrite and sulphite reductase 4Fe-4S domain-like"/>
    <property type="match status" value="2"/>
</dbReference>
<dbReference type="SUPFAM" id="SSF55124">
    <property type="entry name" value="Nitrite/Sulfite reductase N-terminal domain-like"/>
    <property type="match status" value="1"/>
</dbReference>
<dbReference type="PROSITE" id="PS00365">
    <property type="entry name" value="NIR_SIR"/>
    <property type="match status" value="1"/>
</dbReference>
<comment type="function">
    <text>Catalyzes the elimination of C-20 in precorrin-3A to form precorrin-3B.</text>
</comment>
<comment type="catalytic activity">
    <reaction>
        <text>precorrin-3A + NADH + O2 + 2 H(+) = precorrin-3B + NAD(+) + H2O</text>
        <dbReference type="Rhea" id="RHEA:17293"/>
        <dbReference type="ChEBI" id="CHEBI:15377"/>
        <dbReference type="ChEBI" id="CHEBI:15378"/>
        <dbReference type="ChEBI" id="CHEBI:15379"/>
        <dbReference type="ChEBI" id="CHEBI:57540"/>
        <dbReference type="ChEBI" id="CHEBI:57945"/>
        <dbReference type="ChEBI" id="CHEBI:58561"/>
        <dbReference type="ChEBI" id="CHEBI:77870"/>
        <dbReference type="EC" id="1.14.13.83"/>
    </reaction>
</comment>
<comment type="pathway">
    <text>Cofactor biosynthesis; adenosylcobalamin biosynthesis; cob(II)yrinate a,c-diamide from precorrin-2 (aerobic route): step 2/10.</text>
</comment>
<comment type="similarity">
    <text evidence="3">Belongs to the nitrite and sulfite reductase 4Fe-4S domain family.</text>
</comment>
<comment type="caution">
    <text evidence="3">Was originally thought to originate from Pseudomonas denitrificans, but similarity searches show that the sequence is much closer to Sinorhizobium. The entry's taxonomy has been changed.</text>
</comment>
<proteinExistence type="inferred from homology"/>
<accession>P21637</accession>
<organism>
    <name type="scientific">Sinorhizobium sp</name>
    <dbReference type="NCBI Taxonomy" id="42445"/>
    <lineage>
        <taxon>Bacteria</taxon>
        <taxon>Pseudomonadati</taxon>
        <taxon>Pseudomonadota</taxon>
        <taxon>Alphaproteobacteria</taxon>
        <taxon>Hyphomicrobiales</taxon>
        <taxon>Rhizobiaceae</taxon>
        <taxon>Sinorhizobium/Ensifer group</taxon>
        <taxon>Sinorhizobium</taxon>
    </lineage>
</organism>
<feature type="chain" id="PRO_0000199966" description="Precorrin-3B synthase">
    <location>
        <begin position="1"/>
        <end position="459"/>
    </location>
</feature>
<feature type="binding site" evidence="2">
    <location>
        <position position="338"/>
    </location>
    <ligand>
        <name>[4Fe-4S] cluster</name>
        <dbReference type="ChEBI" id="CHEBI:49883"/>
    </ligand>
</feature>
<feature type="binding site" evidence="2">
    <location>
        <position position="344"/>
    </location>
    <ligand>
        <name>[4Fe-4S] cluster</name>
        <dbReference type="ChEBI" id="CHEBI:49883"/>
    </ligand>
</feature>
<feature type="binding site" evidence="2">
    <location>
        <position position="377"/>
    </location>
    <ligand>
        <name>[4Fe-4S] cluster</name>
        <dbReference type="ChEBI" id="CHEBI:49883"/>
    </ligand>
</feature>
<feature type="binding site" evidence="1">
    <location>
        <position position="381"/>
    </location>
    <ligand>
        <name>[4Fe-4S] cluster</name>
        <dbReference type="ChEBI" id="CHEBI:49883"/>
    </ligand>
</feature>
<feature type="binding site" description="axial binding residue" evidence="1">
    <location>
        <position position="381"/>
    </location>
    <ligand>
        <name>siroheme</name>
        <dbReference type="ChEBI" id="CHEBI:60052"/>
    </ligand>
    <ligandPart>
        <name>Fe</name>
        <dbReference type="ChEBI" id="CHEBI:18248"/>
    </ligandPart>
</feature>
<evidence type="ECO:0000250" key="1"/>
<evidence type="ECO:0000255" key="2"/>
<evidence type="ECO:0000305" key="3"/>
<protein>
    <recommendedName>
        <fullName>Precorrin-3B synthase</fullName>
        <ecNumber>1.14.13.83</ecNumber>
    </recommendedName>
</protein>
<gene>
    <name type="primary">cobG</name>
</gene>
<sequence>MTDLMTSCALPLTGDAGTVASMRRGACPSLAEPMQTGDGLLVRVRPTDDSLTLPKVIALATAAERFGNGIIEITARGNLQLRGLSAASVPRLAQAIGDAEIAIAEGLAIEVPPLAGIDPDEIADPRPIATELREALDVRQVPLKLAPKLSVVIDSGGRFGLGAVVADIRLQAVSTVAGVAWVLSLGGTSTKASSVGTLAGNAVVPALITILEKLASLGTTMRGRDLDPSEIRALCRCETSSERPAAPRSAAIPGIHALGNADTVLGLGLAFAQVEAAALASYLHQVQALGANAIRLAPGHAFFVLGLCPETAAVAQSLAASHGFRIAEQDPRNAIATCAGSKGCASAWMETKGMAERLVETAPELLDGSLTVHLSGCAKGCARPKPSELTLVGAPSGYGLVVNGAANGLPSAYTDENGMGSALARLGRLVRQNKDAGESAQSCLTRLGAARVSAAFEQG</sequence>
<name>COBG_SINSX</name>
<reference key="1">
    <citation type="journal article" date="1990" name="J. Bacteriol.">
        <title>Genetic and sequence analysis of an 8.7-kilobase Pseudomonas denitrificans fragment carrying eight genes involved in transformation of precorrin-2 to cobyrinic acid.</title>
        <authorList>
            <person name="Crouzet J."/>
            <person name="Cameron B."/>
            <person name="Cauchois L."/>
            <person name="Rigault S."/>
            <person name="Rouyez M.-C."/>
            <person name="Blanche F."/>
            <person name="Thibaut D."/>
            <person name="Debussche L."/>
        </authorList>
    </citation>
    <scope>NUCLEOTIDE SEQUENCE [GENOMIC DNA]</scope>
    <source>
        <strain>SC510</strain>
    </source>
</reference>